<name>PUR7_ECO27</name>
<gene>
    <name evidence="1" type="primary">purC</name>
    <name type="ordered locus">E2348C_2713</name>
</gene>
<feature type="chain" id="PRO_1000122913" description="Phosphoribosylaminoimidazole-succinocarboxamide synthase">
    <location>
        <begin position="1"/>
        <end position="237"/>
    </location>
</feature>
<reference key="1">
    <citation type="journal article" date="2009" name="J. Bacteriol.">
        <title>Complete genome sequence and comparative genome analysis of enteropathogenic Escherichia coli O127:H6 strain E2348/69.</title>
        <authorList>
            <person name="Iguchi A."/>
            <person name="Thomson N.R."/>
            <person name="Ogura Y."/>
            <person name="Saunders D."/>
            <person name="Ooka T."/>
            <person name="Henderson I.R."/>
            <person name="Harris D."/>
            <person name="Asadulghani M."/>
            <person name="Kurokawa K."/>
            <person name="Dean P."/>
            <person name="Kenny B."/>
            <person name="Quail M.A."/>
            <person name="Thurston S."/>
            <person name="Dougan G."/>
            <person name="Hayashi T."/>
            <person name="Parkhill J."/>
            <person name="Frankel G."/>
        </authorList>
    </citation>
    <scope>NUCLEOTIDE SEQUENCE [LARGE SCALE GENOMIC DNA]</scope>
    <source>
        <strain>E2348/69 / EPEC</strain>
    </source>
</reference>
<sequence>MQKQAELYRGKAKTVYSTENPDLLVLEFRNDTSAGDGARIEQFDRKGMVNNKFNYFIMSKLAEAGIPTQMERLLSDTECLVKKLDMVPVECVVRNRAAGSLVKRLGIEEGIELNPPLFDLFLKNDAMHDPMVNESYCETFGWVSKENLARMKELTYKANDVLKKLFDDAGLILVDFKLEFGLYKGEVVLGDEFSPDGSRLWDKETLEKMDKDRFRQSLGGLIEAYEAVARRLGVQLD</sequence>
<evidence type="ECO:0000255" key="1">
    <source>
        <dbReference type="HAMAP-Rule" id="MF_00137"/>
    </source>
</evidence>
<keyword id="KW-0067">ATP-binding</keyword>
<keyword id="KW-0436">Ligase</keyword>
<keyword id="KW-0547">Nucleotide-binding</keyword>
<keyword id="KW-0658">Purine biosynthesis</keyword>
<keyword id="KW-1185">Reference proteome</keyword>
<organism>
    <name type="scientific">Escherichia coli O127:H6 (strain E2348/69 / EPEC)</name>
    <dbReference type="NCBI Taxonomy" id="574521"/>
    <lineage>
        <taxon>Bacteria</taxon>
        <taxon>Pseudomonadati</taxon>
        <taxon>Pseudomonadota</taxon>
        <taxon>Gammaproteobacteria</taxon>
        <taxon>Enterobacterales</taxon>
        <taxon>Enterobacteriaceae</taxon>
        <taxon>Escherichia</taxon>
    </lineage>
</organism>
<comment type="catalytic activity">
    <reaction evidence="1">
        <text>5-amino-1-(5-phospho-D-ribosyl)imidazole-4-carboxylate + L-aspartate + ATP = (2S)-2-[5-amino-1-(5-phospho-beta-D-ribosyl)imidazole-4-carboxamido]succinate + ADP + phosphate + 2 H(+)</text>
        <dbReference type="Rhea" id="RHEA:22628"/>
        <dbReference type="ChEBI" id="CHEBI:15378"/>
        <dbReference type="ChEBI" id="CHEBI:29991"/>
        <dbReference type="ChEBI" id="CHEBI:30616"/>
        <dbReference type="ChEBI" id="CHEBI:43474"/>
        <dbReference type="ChEBI" id="CHEBI:58443"/>
        <dbReference type="ChEBI" id="CHEBI:77657"/>
        <dbReference type="ChEBI" id="CHEBI:456216"/>
        <dbReference type="EC" id="6.3.2.6"/>
    </reaction>
</comment>
<comment type="pathway">
    <text evidence="1">Purine metabolism; IMP biosynthesis via de novo pathway; 5-amino-1-(5-phospho-D-ribosyl)imidazole-4-carboxamide from 5-amino-1-(5-phospho-D-ribosyl)imidazole-4-carboxylate: step 1/2.</text>
</comment>
<comment type="similarity">
    <text evidence="1">Belongs to the SAICAR synthetase family.</text>
</comment>
<accession>B7UGM6</accession>
<proteinExistence type="inferred from homology"/>
<protein>
    <recommendedName>
        <fullName evidence="1">Phosphoribosylaminoimidazole-succinocarboxamide synthase</fullName>
        <ecNumber evidence="1">6.3.2.6</ecNumber>
    </recommendedName>
    <alternativeName>
        <fullName evidence="1">SAICAR synthetase</fullName>
    </alternativeName>
</protein>
<dbReference type="EC" id="6.3.2.6" evidence="1"/>
<dbReference type="EMBL" id="FM180568">
    <property type="protein sequence ID" value="CAS10261.1"/>
    <property type="molecule type" value="Genomic_DNA"/>
</dbReference>
<dbReference type="RefSeq" id="WP_001295467.1">
    <property type="nucleotide sequence ID" value="NC_011601.1"/>
</dbReference>
<dbReference type="SMR" id="B7UGM6"/>
<dbReference type="GeneID" id="89517285"/>
<dbReference type="KEGG" id="ecg:E2348C_2713"/>
<dbReference type="HOGENOM" id="CLU_061495_2_1_6"/>
<dbReference type="UniPathway" id="UPA00074">
    <property type="reaction ID" value="UER00131"/>
</dbReference>
<dbReference type="Proteomes" id="UP000008205">
    <property type="component" value="Chromosome"/>
</dbReference>
<dbReference type="GO" id="GO:0005829">
    <property type="term" value="C:cytosol"/>
    <property type="evidence" value="ECO:0007669"/>
    <property type="project" value="TreeGrafter"/>
</dbReference>
<dbReference type="GO" id="GO:0005524">
    <property type="term" value="F:ATP binding"/>
    <property type="evidence" value="ECO:0007669"/>
    <property type="project" value="UniProtKB-KW"/>
</dbReference>
<dbReference type="GO" id="GO:0004639">
    <property type="term" value="F:phosphoribosylaminoimidazolesuccinocarboxamide synthase activity"/>
    <property type="evidence" value="ECO:0007669"/>
    <property type="project" value="UniProtKB-UniRule"/>
</dbReference>
<dbReference type="GO" id="GO:0006189">
    <property type="term" value="P:'de novo' IMP biosynthetic process"/>
    <property type="evidence" value="ECO:0007669"/>
    <property type="project" value="UniProtKB-UniRule"/>
</dbReference>
<dbReference type="GO" id="GO:0009236">
    <property type="term" value="P:cobalamin biosynthetic process"/>
    <property type="evidence" value="ECO:0007669"/>
    <property type="project" value="InterPro"/>
</dbReference>
<dbReference type="CDD" id="cd01415">
    <property type="entry name" value="SAICAR_synt_PurC"/>
    <property type="match status" value="1"/>
</dbReference>
<dbReference type="FunFam" id="3.30.200.20:FF:000086">
    <property type="entry name" value="Phosphoribosylaminoimidazole-succinocarboxamide synthase"/>
    <property type="match status" value="1"/>
</dbReference>
<dbReference type="FunFam" id="3.30.470.20:FF:000006">
    <property type="entry name" value="Phosphoribosylaminoimidazole-succinocarboxamide synthase"/>
    <property type="match status" value="1"/>
</dbReference>
<dbReference type="Gene3D" id="3.30.470.20">
    <property type="entry name" value="ATP-grasp fold, B domain"/>
    <property type="match status" value="1"/>
</dbReference>
<dbReference type="Gene3D" id="3.30.200.20">
    <property type="entry name" value="Phosphorylase Kinase, domain 1"/>
    <property type="match status" value="1"/>
</dbReference>
<dbReference type="HAMAP" id="MF_00137">
    <property type="entry name" value="SAICAR_synth"/>
    <property type="match status" value="1"/>
</dbReference>
<dbReference type="InterPro" id="IPR028923">
    <property type="entry name" value="SAICAR_synt/ADE2_N"/>
</dbReference>
<dbReference type="InterPro" id="IPR033934">
    <property type="entry name" value="SAICAR_synt_PurC"/>
</dbReference>
<dbReference type="InterPro" id="IPR001636">
    <property type="entry name" value="SAICAR_synth"/>
</dbReference>
<dbReference type="InterPro" id="IPR050089">
    <property type="entry name" value="SAICAR_synthetase"/>
</dbReference>
<dbReference type="InterPro" id="IPR018236">
    <property type="entry name" value="SAICAR_synthetase_CS"/>
</dbReference>
<dbReference type="NCBIfam" id="TIGR00081">
    <property type="entry name" value="purC"/>
    <property type="match status" value="1"/>
</dbReference>
<dbReference type="PANTHER" id="PTHR43599">
    <property type="entry name" value="MULTIFUNCTIONAL PROTEIN ADE2"/>
    <property type="match status" value="1"/>
</dbReference>
<dbReference type="PANTHER" id="PTHR43599:SF3">
    <property type="entry name" value="SI:DKEY-6E2.2"/>
    <property type="match status" value="1"/>
</dbReference>
<dbReference type="Pfam" id="PF01259">
    <property type="entry name" value="SAICAR_synt"/>
    <property type="match status" value="1"/>
</dbReference>
<dbReference type="SUPFAM" id="SSF56104">
    <property type="entry name" value="SAICAR synthase-like"/>
    <property type="match status" value="1"/>
</dbReference>
<dbReference type="PROSITE" id="PS01057">
    <property type="entry name" value="SAICAR_SYNTHETASE_1"/>
    <property type="match status" value="1"/>
</dbReference>
<dbReference type="PROSITE" id="PS01058">
    <property type="entry name" value="SAICAR_SYNTHETASE_2"/>
    <property type="match status" value="1"/>
</dbReference>